<feature type="initiator methionine" description="Removed" evidence="2">
    <location>
        <position position="1"/>
    </location>
</feature>
<feature type="chain" id="PRO_0000121083" description="Ras-related protein Rab-3B">
    <location>
        <begin position="2"/>
        <end position="219"/>
    </location>
</feature>
<feature type="short sequence motif" description="Switch 1" evidence="4">
    <location>
        <begin position="45"/>
        <end position="58"/>
    </location>
</feature>
<feature type="short sequence motif" description="Switch 2" evidence="4">
    <location>
        <begin position="78"/>
        <end position="96"/>
    </location>
</feature>
<feature type="binding site" evidence="4">
    <location>
        <position position="31"/>
    </location>
    <ligand>
        <name>GTP</name>
        <dbReference type="ChEBI" id="CHEBI:37565"/>
    </ligand>
</feature>
<feature type="binding site" evidence="4">
    <location>
        <position position="32"/>
    </location>
    <ligand>
        <name>GTP</name>
        <dbReference type="ChEBI" id="CHEBI:37565"/>
    </ligand>
</feature>
<feature type="binding site" evidence="4">
    <location>
        <position position="33"/>
    </location>
    <ligand>
        <name>GTP</name>
        <dbReference type="ChEBI" id="CHEBI:37565"/>
    </ligand>
</feature>
<feature type="binding site" evidence="4">
    <location>
        <position position="34"/>
    </location>
    <ligand>
        <name>GTP</name>
        <dbReference type="ChEBI" id="CHEBI:37565"/>
    </ligand>
</feature>
<feature type="binding site" evidence="4">
    <location>
        <position position="35"/>
    </location>
    <ligand>
        <name>GTP</name>
        <dbReference type="ChEBI" id="CHEBI:37565"/>
    </ligand>
</feature>
<feature type="binding site" evidence="4">
    <location>
        <position position="36"/>
    </location>
    <ligand>
        <name>GTP</name>
        <dbReference type="ChEBI" id="CHEBI:37565"/>
    </ligand>
</feature>
<feature type="binding site" evidence="4">
    <location>
        <position position="36"/>
    </location>
    <ligand>
        <name>Mg(2+)</name>
        <dbReference type="ChEBI" id="CHEBI:18420"/>
    </ligand>
</feature>
<feature type="binding site" evidence="4">
    <location>
        <position position="37"/>
    </location>
    <ligand>
        <name>GTP</name>
        <dbReference type="ChEBI" id="CHEBI:37565"/>
    </ligand>
</feature>
<feature type="binding site" evidence="4">
    <location>
        <position position="49"/>
    </location>
    <ligand>
        <name>GTP</name>
        <dbReference type="ChEBI" id="CHEBI:37565"/>
    </ligand>
</feature>
<feature type="binding site" evidence="4">
    <location>
        <position position="53"/>
    </location>
    <ligand>
        <name>GTP</name>
        <dbReference type="ChEBI" id="CHEBI:37565"/>
    </ligand>
</feature>
<feature type="binding site" evidence="4">
    <location>
        <position position="54"/>
    </location>
    <ligand>
        <name>Mg(2+)</name>
        <dbReference type="ChEBI" id="CHEBI:18420"/>
    </ligand>
</feature>
<feature type="binding site" evidence="4">
    <location>
        <position position="77"/>
    </location>
    <ligand>
        <name>Mg(2+)</name>
        <dbReference type="ChEBI" id="CHEBI:18420"/>
    </ligand>
</feature>
<feature type="binding site" evidence="4">
    <location>
        <position position="80"/>
    </location>
    <ligand>
        <name>GTP</name>
        <dbReference type="ChEBI" id="CHEBI:37565"/>
    </ligand>
</feature>
<feature type="binding site" evidence="4">
    <location>
        <position position="135"/>
    </location>
    <ligand>
        <name>GTP</name>
        <dbReference type="ChEBI" id="CHEBI:37565"/>
    </ligand>
</feature>
<feature type="binding site" evidence="4">
    <location>
        <position position="136"/>
    </location>
    <ligand>
        <name>GTP</name>
        <dbReference type="ChEBI" id="CHEBI:37565"/>
    </ligand>
</feature>
<feature type="binding site" evidence="4">
    <location>
        <position position="138"/>
    </location>
    <ligand>
        <name>GTP</name>
        <dbReference type="ChEBI" id="CHEBI:37565"/>
    </ligand>
</feature>
<feature type="binding site" evidence="4">
    <location>
        <position position="166"/>
    </location>
    <ligand>
        <name>GTP</name>
        <dbReference type="ChEBI" id="CHEBI:37565"/>
    </ligand>
</feature>
<feature type="binding site" evidence="4">
    <location>
        <position position="167"/>
    </location>
    <ligand>
        <name>GTP</name>
        <dbReference type="ChEBI" id="CHEBI:37565"/>
    </ligand>
</feature>
<feature type="modified residue" description="N-acetylalanine" evidence="2">
    <location>
        <position position="2"/>
    </location>
</feature>
<feature type="modified residue" description="Phosphothreonine" evidence="4">
    <location>
        <position position="86"/>
    </location>
</feature>
<feature type="modified residue" description="Phosphoserine" evidence="10">
    <location>
        <position position="188"/>
    </location>
</feature>
<feature type="modified residue" description="Phosphoserine" evidence="10">
    <location>
        <position position="190"/>
    </location>
</feature>
<feature type="modified residue" description="Cysteine methyl ester" evidence="1">
    <location>
        <position position="219"/>
    </location>
</feature>
<feature type="lipid moiety-binding region" description="S-geranylgeranyl cysteine" evidence="1">
    <location>
        <position position="217"/>
    </location>
</feature>
<feature type="lipid moiety-binding region" description="S-geranylgeranyl cysteine" evidence="1">
    <location>
        <position position="219"/>
    </location>
</feature>
<proteinExistence type="evidence at protein level"/>
<sequence length="219" mass="24785">MASVTDGNTGIRDASDQNFDYMFKLLIIGNSSVGKTSFLFRYADDTFTPAFVSTVGIDFKVKTVYRHEKRVKLQIWDTAGQERYRTITTAYYRGAMGFILMYDITNEESFNAVQDWATQIKTYSWDNAQVILVGNKCDMEEERVIPTEKGRLLAEQLGFDFFEASAKENISVRQAFERLVDAICDKMSDSMDTDPSVLGASKTTRLSDTPPLLQQNCSC</sequence>
<name>RAB3B_RAT</name>
<organism>
    <name type="scientific">Rattus norvegicus</name>
    <name type="common">Rat</name>
    <dbReference type="NCBI Taxonomy" id="10116"/>
    <lineage>
        <taxon>Eukaryota</taxon>
        <taxon>Metazoa</taxon>
        <taxon>Chordata</taxon>
        <taxon>Craniata</taxon>
        <taxon>Vertebrata</taxon>
        <taxon>Euteleostomi</taxon>
        <taxon>Mammalia</taxon>
        <taxon>Eutheria</taxon>
        <taxon>Euarchontoglires</taxon>
        <taxon>Glires</taxon>
        <taxon>Rodentia</taxon>
        <taxon>Myomorpha</taxon>
        <taxon>Muroidea</taxon>
        <taxon>Muridae</taxon>
        <taxon>Murinae</taxon>
        <taxon>Rattus</taxon>
    </lineage>
</organism>
<dbReference type="EC" id="3.6.5.2" evidence="4"/>
<dbReference type="EMBL" id="Y14019">
    <property type="protein sequence ID" value="CAA74341.1"/>
    <property type="molecule type" value="mRNA"/>
</dbReference>
<dbReference type="EMBL" id="S68807">
    <property type="protein sequence ID" value="AAB29894.1"/>
    <property type="molecule type" value="mRNA"/>
</dbReference>
<dbReference type="PIR" id="I53485">
    <property type="entry name" value="I53485"/>
</dbReference>
<dbReference type="RefSeq" id="NP_112353.1">
    <property type="nucleotide sequence ID" value="NM_031091.2"/>
</dbReference>
<dbReference type="RefSeq" id="XP_063144542.1">
    <property type="nucleotide sequence ID" value="XM_063288472.1"/>
</dbReference>
<dbReference type="SMR" id="Q63941"/>
<dbReference type="BioGRID" id="249627">
    <property type="interactions" value="1"/>
</dbReference>
<dbReference type="FunCoup" id="Q63941">
    <property type="interactions" value="686"/>
</dbReference>
<dbReference type="IntAct" id="Q63941">
    <property type="interactions" value="1"/>
</dbReference>
<dbReference type="MINT" id="Q63941"/>
<dbReference type="STRING" id="10116.ENSRNOP00000010645"/>
<dbReference type="iPTMnet" id="Q63941"/>
<dbReference type="PhosphoSitePlus" id="Q63941"/>
<dbReference type="jPOST" id="Q63941"/>
<dbReference type="PaxDb" id="10116-ENSRNOP00000010645"/>
<dbReference type="GeneID" id="81755"/>
<dbReference type="KEGG" id="rno:81755"/>
<dbReference type="AGR" id="RGD:620922"/>
<dbReference type="CTD" id="5865"/>
<dbReference type="RGD" id="620922">
    <property type="gene designation" value="Rab3b"/>
</dbReference>
<dbReference type="VEuPathDB" id="HostDB:ENSRNOG00000008001"/>
<dbReference type="eggNOG" id="KOG0093">
    <property type="taxonomic scope" value="Eukaryota"/>
</dbReference>
<dbReference type="HOGENOM" id="CLU_041217_10_1_1"/>
<dbReference type="InParanoid" id="Q63941"/>
<dbReference type="OrthoDB" id="9989112at2759"/>
<dbReference type="PhylomeDB" id="Q63941"/>
<dbReference type="Reactome" id="R-RNO-8873719">
    <property type="pathway name" value="RAB geranylgeranylation"/>
</dbReference>
<dbReference type="PRO" id="PR:Q63941"/>
<dbReference type="Proteomes" id="UP000002494">
    <property type="component" value="Chromosome 5"/>
</dbReference>
<dbReference type="Bgee" id="ENSRNOG00000008001">
    <property type="expression patterns" value="Expressed in heart and 17 other cell types or tissues"/>
</dbReference>
<dbReference type="GO" id="GO:0005737">
    <property type="term" value="C:cytoplasm"/>
    <property type="evidence" value="ECO:0000266"/>
    <property type="project" value="RGD"/>
</dbReference>
<dbReference type="GO" id="GO:0098691">
    <property type="term" value="C:dopaminergic synapse"/>
    <property type="evidence" value="ECO:0000266"/>
    <property type="project" value="RGD"/>
</dbReference>
<dbReference type="GO" id="GO:0005768">
    <property type="term" value="C:endosome"/>
    <property type="evidence" value="ECO:0000318"/>
    <property type="project" value="GO_Central"/>
</dbReference>
<dbReference type="GO" id="GO:0005794">
    <property type="term" value="C:Golgi apparatus"/>
    <property type="evidence" value="ECO:0007669"/>
    <property type="project" value="UniProtKB-SubCell"/>
</dbReference>
<dbReference type="GO" id="GO:0048471">
    <property type="term" value="C:perinuclear region of cytoplasm"/>
    <property type="evidence" value="ECO:0000266"/>
    <property type="project" value="RGD"/>
</dbReference>
<dbReference type="GO" id="GO:0005886">
    <property type="term" value="C:plasma membrane"/>
    <property type="evidence" value="ECO:0000318"/>
    <property type="project" value="GO_Central"/>
</dbReference>
<dbReference type="GO" id="GO:0030141">
    <property type="term" value="C:secretory granule"/>
    <property type="evidence" value="ECO:0000266"/>
    <property type="project" value="RGD"/>
</dbReference>
<dbReference type="GO" id="GO:0008021">
    <property type="term" value="C:synaptic vesicle"/>
    <property type="evidence" value="ECO:0000266"/>
    <property type="project" value="RGD"/>
</dbReference>
<dbReference type="GO" id="GO:0030672">
    <property type="term" value="C:synaptic vesicle membrane"/>
    <property type="evidence" value="ECO:0000314"/>
    <property type="project" value="SynGO-UCL"/>
</dbReference>
<dbReference type="GO" id="GO:0031982">
    <property type="term" value="C:vesicle"/>
    <property type="evidence" value="ECO:0000266"/>
    <property type="project" value="RGD"/>
</dbReference>
<dbReference type="GO" id="GO:0019003">
    <property type="term" value="F:GDP binding"/>
    <property type="evidence" value="ECO:0000266"/>
    <property type="project" value="RGD"/>
</dbReference>
<dbReference type="GO" id="GO:0005525">
    <property type="term" value="F:GTP binding"/>
    <property type="evidence" value="ECO:0000303"/>
    <property type="project" value="RGD"/>
</dbReference>
<dbReference type="GO" id="GO:0030742">
    <property type="term" value="F:GTP-dependent protein binding"/>
    <property type="evidence" value="ECO:0000266"/>
    <property type="project" value="RGD"/>
</dbReference>
<dbReference type="GO" id="GO:0003924">
    <property type="term" value="F:GTPase activity"/>
    <property type="evidence" value="ECO:0000266"/>
    <property type="project" value="RGD"/>
</dbReference>
<dbReference type="GO" id="GO:0031489">
    <property type="term" value="F:myosin V binding"/>
    <property type="evidence" value="ECO:0000266"/>
    <property type="project" value="RGD"/>
</dbReference>
<dbReference type="GO" id="GO:0019882">
    <property type="term" value="P:antigen processing and presentation"/>
    <property type="evidence" value="ECO:0000266"/>
    <property type="project" value="RGD"/>
</dbReference>
<dbReference type="GO" id="GO:0006887">
    <property type="term" value="P:exocytosis"/>
    <property type="evidence" value="ECO:0000318"/>
    <property type="project" value="GO_Central"/>
</dbReference>
<dbReference type="GO" id="GO:0051586">
    <property type="term" value="P:positive regulation of dopamine uptake involved in synaptic transmission"/>
    <property type="evidence" value="ECO:0000266"/>
    <property type="project" value="RGD"/>
</dbReference>
<dbReference type="GO" id="GO:0015031">
    <property type="term" value="P:protein transport"/>
    <property type="evidence" value="ECO:0007669"/>
    <property type="project" value="UniProtKB-KW"/>
</dbReference>
<dbReference type="GO" id="GO:0017157">
    <property type="term" value="P:regulation of exocytosis"/>
    <property type="evidence" value="ECO:0000266"/>
    <property type="project" value="RGD"/>
</dbReference>
<dbReference type="GO" id="GO:0098693">
    <property type="term" value="P:regulation of synaptic vesicle cycle"/>
    <property type="evidence" value="ECO:0000266"/>
    <property type="project" value="RGD"/>
</dbReference>
<dbReference type="GO" id="GO:0097494">
    <property type="term" value="P:regulation of vesicle size"/>
    <property type="evidence" value="ECO:0000266"/>
    <property type="project" value="RGD"/>
</dbReference>
<dbReference type="CDD" id="cd01865">
    <property type="entry name" value="Rab3"/>
    <property type="match status" value="1"/>
</dbReference>
<dbReference type="FunFam" id="3.40.50.300:FF:000206">
    <property type="entry name" value="Ras-related protein Rab-3C"/>
    <property type="match status" value="1"/>
</dbReference>
<dbReference type="Gene3D" id="3.40.50.300">
    <property type="entry name" value="P-loop containing nucleotide triphosphate hydrolases"/>
    <property type="match status" value="1"/>
</dbReference>
<dbReference type="InterPro" id="IPR027417">
    <property type="entry name" value="P-loop_NTPase"/>
</dbReference>
<dbReference type="InterPro" id="IPR037872">
    <property type="entry name" value="Rab3"/>
</dbReference>
<dbReference type="InterPro" id="IPR005225">
    <property type="entry name" value="Small_GTP-bd"/>
</dbReference>
<dbReference type="InterPro" id="IPR001806">
    <property type="entry name" value="Small_GTPase"/>
</dbReference>
<dbReference type="InterPro" id="IPR050305">
    <property type="entry name" value="Small_GTPase_Rab"/>
</dbReference>
<dbReference type="NCBIfam" id="TIGR00231">
    <property type="entry name" value="small_GTP"/>
    <property type="match status" value="1"/>
</dbReference>
<dbReference type="PANTHER" id="PTHR47980">
    <property type="entry name" value="LD44762P"/>
    <property type="match status" value="1"/>
</dbReference>
<dbReference type="Pfam" id="PF00071">
    <property type="entry name" value="Ras"/>
    <property type="match status" value="1"/>
</dbReference>
<dbReference type="PRINTS" id="PR00449">
    <property type="entry name" value="RASTRNSFRMNG"/>
</dbReference>
<dbReference type="SMART" id="SM00175">
    <property type="entry name" value="RAB"/>
    <property type="match status" value="1"/>
</dbReference>
<dbReference type="SMART" id="SM00176">
    <property type="entry name" value="RAN"/>
    <property type="match status" value="1"/>
</dbReference>
<dbReference type="SMART" id="SM00173">
    <property type="entry name" value="RAS"/>
    <property type="match status" value="1"/>
</dbReference>
<dbReference type="SMART" id="SM00174">
    <property type="entry name" value="RHO"/>
    <property type="match status" value="1"/>
</dbReference>
<dbReference type="SUPFAM" id="SSF52540">
    <property type="entry name" value="P-loop containing nucleoside triphosphate hydrolases"/>
    <property type="match status" value="1"/>
</dbReference>
<dbReference type="PROSITE" id="PS51419">
    <property type="entry name" value="RAB"/>
    <property type="match status" value="1"/>
</dbReference>
<evidence type="ECO:0000250" key="1"/>
<evidence type="ECO:0000250" key="2">
    <source>
        <dbReference type="UniProtKB" id="O95716"/>
    </source>
</evidence>
<evidence type="ECO:0000250" key="3">
    <source>
        <dbReference type="UniProtKB" id="P20336"/>
    </source>
</evidence>
<evidence type="ECO:0000250" key="4">
    <source>
        <dbReference type="UniProtKB" id="P20337"/>
    </source>
</evidence>
<evidence type="ECO:0000250" key="5">
    <source>
        <dbReference type="UniProtKB" id="Q9CZT8"/>
    </source>
</evidence>
<evidence type="ECO:0000269" key="6">
    <source>
    </source>
</evidence>
<evidence type="ECO:0000269" key="7">
    <source>
    </source>
</evidence>
<evidence type="ECO:0000305" key="8"/>
<evidence type="ECO:0000312" key="9">
    <source>
        <dbReference type="RGD" id="620922"/>
    </source>
</evidence>
<evidence type="ECO:0007744" key="10">
    <source>
    </source>
</evidence>
<keyword id="KW-0007">Acetylation</keyword>
<keyword id="KW-1003">Cell membrane</keyword>
<keyword id="KW-0333">Golgi apparatus</keyword>
<keyword id="KW-0342">GTP-binding</keyword>
<keyword id="KW-0378">Hydrolase</keyword>
<keyword id="KW-0449">Lipoprotein</keyword>
<keyword id="KW-0460">Magnesium</keyword>
<keyword id="KW-0472">Membrane</keyword>
<keyword id="KW-0479">Metal-binding</keyword>
<keyword id="KW-0488">Methylation</keyword>
<keyword id="KW-0547">Nucleotide-binding</keyword>
<keyword id="KW-0597">Phosphoprotein</keyword>
<keyword id="KW-0636">Prenylation</keyword>
<keyword id="KW-0653">Protein transport</keyword>
<keyword id="KW-1185">Reference proteome</keyword>
<keyword id="KW-0813">Transport</keyword>
<reference key="1">
    <citation type="journal article" date="1997" name="Biochem. Biophys. Res. Commun.">
        <title>Differential expression of Rab3 isoforms during differentiation of pancreatic acinar cell line AR42J.</title>
        <authorList>
            <person name="Klengel R."/>
            <person name="Piiper A."/>
            <person name="Pittelkow S."/>
            <person name="Zeuzem S."/>
        </authorList>
    </citation>
    <scope>NUCLEOTIDE SEQUENCE [MRNA]</scope>
    <source>
        <strain>Sprague-Dawley</strain>
        <tissue>Epididymis</tissue>
    </source>
</reference>
<reference key="2">
    <citation type="journal article" date="1994" name="FEBS Lett.">
        <title>RT-PCR cloning of Rab3 isoforms expressed in peritoneal mast cells.</title>
        <authorList>
            <person name="Oberhauser A.F."/>
            <person name="Balan V."/>
            <person name="Fernandez-Badilla C.L."/>
            <person name="Fernandez J.M."/>
        </authorList>
    </citation>
    <scope>NUCLEOTIDE SEQUENCE [MRNA] OF 16-82</scope>
    <source>
        <tissue>Mast cell</tissue>
    </source>
</reference>
<reference key="3">
    <citation type="journal article" date="1997" name="Nature">
        <title>Rim is a putative Rab3 effector in regulating synaptic-vesicle fusion.</title>
        <authorList>
            <person name="Wang Y."/>
            <person name="Okamoto M."/>
            <person name="Schmitz F."/>
            <person name="Hofmann K."/>
            <person name="Suedhof T.C."/>
        </authorList>
    </citation>
    <scope>INTERACTION WITH RIMS1</scope>
</reference>
<reference key="4">
    <citation type="journal article" date="2000" name="J. Biol. Chem.">
        <title>The RIM/NIM family of neuronal C2 domain proteins. Interactions with Rab3 and a new class of Src homology 3 domain proteins.</title>
        <authorList>
            <person name="Wang Y."/>
            <person name="Sugita S."/>
            <person name="Suedhof T.C."/>
        </authorList>
    </citation>
    <scope>INTERACTION WITH RIMS2</scope>
</reference>
<reference key="5">
    <citation type="journal article" date="2012" name="Nat. Commun.">
        <title>Quantitative maps of protein phosphorylation sites across 14 different rat organs and tissues.</title>
        <authorList>
            <person name="Lundby A."/>
            <person name="Secher A."/>
            <person name="Lage K."/>
            <person name="Nordsborg N.B."/>
            <person name="Dmytriyev A."/>
            <person name="Lundby C."/>
            <person name="Olsen J.V."/>
        </authorList>
    </citation>
    <scope>PHOSPHORYLATION [LARGE SCALE ANALYSIS] AT SER-188 AND SER-190</scope>
    <scope>IDENTIFICATION BY MASS SPECTROMETRY [LARGE SCALE ANALYSIS]</scope>
</reference>
<accession>Q63941</accession>
<protein>
    <recommendedName>
        <fullName>Ras-related protein Rab-3B</fullName>
        <ecNumber evidence="4">3.6.5.2</ecNumber>
    </recommendedName>
</protein>
<comment type="function">
    <text evidence="4">The small GTPases Rab are key regulators of intracellular membrane trafficking, from the formation of transport vesicles to their fusion with membranes. Rabs cycle between an inactive GDP-bound form and an active GTP-bound form that is able to recruit to membranes different sets of downstream effectors directly responsible for vesicle formation, movement, tethering and fusion.</text>
</comment>
<comment type="catalytic activity">
    <reaction evidence="4">
        <text>GTP + H2O = GDP + phosphate + H(+)</text>
        <dbReference type="Rhea" id="RHEA:19669"/>
        <dbReference type="ChEBI" id="CHEBI:15377"/>
        <dbReference type="ChEBI" id="CHEBI:15378"/>
        <dbReference type="ChEBI" id="CHEBI:37565"/>
        <dbReference type="ChEBI" id="CHEBI:43474"/>
        <dbReference type="ChEBI" id="CHEBI:58189"/>
        <dbReference type="EC" id="3.6.5.2"/>
    </reaction>
    <physiologicalReaction direction="left-to-right" evidence="4">
        <dbReference type="Rhea" id="RHEA:19670"/>
    </physiologicalReaction>
</comment>
<comment type="cofactor">
    <cofactor evidence="4">
        <name>Mg(2+)</name>
        <dbReference type="ChEBI" id="CHEBI:18420"/>
    </cofactor>
</comment>
<comment type="activity regulation">
    <text evidence="3">Regulated by guanine nucleotide exchange factors (GEFs) which promote the exchange of bound GDP for free GTP. Regulated by GTPase activating proteins (GAPs) which increase the GTP hydrolysis activity. Inhibited by GDP dissociation inhibitors (GDIs) which prevent Rab-GDP dissociation.</text>
</comment>
<comment type="subunit">
    <text evidence="4 5 6 7">Interacts with RPH3A and RPH3AL (By similarity). Interacts with RIMS1 (PubMed:9252191). Interacts with RIMS2 (PubMed:10748113). The GTP-bound form interacts with GAS8/DRC4 (via coiled-coil domains) (By similarity). Interacts with GDI2, and CHM; phosphorylation at Thr-86 disrupts these interactions (By similarity). Interacts with MADD (via uDENN domain); the GTP-bound form is preferred for interaction (By similarity).</text>
</comment>
<comment type="subcellular location">
    <subcellularLocation>
        <location evidence="8">Cell membrane</location>
        <topology evidence="8">Lipid-anchor</topology>
        <orientation evidence="8">Cytoplasmic side</orientation>
    </subcellularLocation>
    <subcellularLocation>
        <location evidence="5">Golgi apparatus</location>
    </subcellularLocation>
    <text evidence="5">Colocalizes with GAS8/DRC4 in the Golgi apparatus.</text>
</comment>
<comment type="domain">
    <text evidence="4">Switch 1, switch 2 and the interswitch regions are characteristic of Rab GTPases and mediate the interactions with Rab downstream effectors. The switch regions undergo conformational changes upon nucleotide binding which drives interaction with specific sets of effector proteins, with most effectors only binding to GTP-bound Rab.</text>
</comment>
<comment type="PTM">
    <text evidence="4">Phosphorylation of Thr-86 in the switch II region by LRRK2 prevents the association of RAB regulatory proteins, including CHM and RAB GDP dissociation inhibitor GDI2.</text>
</comment>
<comment type="similarity">
    <text evidence="8">Belongs to the small GTPase superfamily. Rab family.</text>
</comment>
<gene>
    <name evidence="9" type="primary">Rab3b</name>
</gene>